<reference key="1">
    <citation type="journal article" date="2000" name="Genomics">
        <title>Cloning of TC-1 (C8orf4), a novel gene found to be overexpressed in thyroid cancer.</title>
        <authorList>
            <person name="Chua E.L."/>
            <person name="Young L."/>
            <person name="Wu W.M."/>
            <person name="Turtle J.R."/>
            <person name="Dong Q."/>
        </authorList>
    </citation>
    <scope>NUCLEOTIDE SEQUENCE [MRNA]</scope>
    <scope>TISSUE SPECIFICITY</scope>
    <scope>VARIANT ILE-10</scope>
    <source>
        <tissue>Thyroid papillary carcinoma</tissue>
    </source>
</reference>
<reference key="2">
    <citation type="journal article" date="2006" name="Nature">
        <title>DNA sequence and analysis of human chromosome 8.</title>
        <authorList>
            <person name="Nusbaum C."/>
            <person name="Mikkelsen T.S."/>
            <person name="Zody M.C."/>
            <person name="Asakawa S."/>
            <person name="Taudien S."/>
            <person name="Garber M."/>
            <person name="Kodira C.D."/>
            <person name="Schueler M.G."/>
            <person name="Shimizu A."/>
            <person name="Whittaker C.A."/>
            <person name="Chang J.L."/>
            <person name="Cuomo C.A."/>
            <person name="Dewar K."/>
            <person name="FitzGerald M.G."/>
            <person name="Yang X."/>
            <person name="Allen N.R."/>
            <person name="Anderson S."/>
            <person name="Asakawa T."/>
            <person name="Blechschmidt K."/>
            <person name="Bloom T."/>
            <person name="Borowsky M.L."/>
            <person name="Butler J."/>
            <person name="Cook A."/>
            <person name="Corum B."/>
            <person name="DeArellano K."/>
            <person name="DeCaprio D."/>
            <person name="Dooley K.T."/>
            <person name="Dorris L. III"/>
            <person name="Engels R."/>
            <person name="Gloeckner G."/>
            <person name="Hafez N."/>
            <person name="Hagopian D.S."/>
            <person name="Hall J.L."/>
            <person name="Ishikawa S.K."/>
            <person name="Jaffe D.B."/>
            <person name="Kamat A."/>
            <person name="Kudoh J."/>
            <person name="Lehmann R."/>
            <person name="Lokitsang T."/>
            <person name="Macdonald P."/>
            <person name="Major J.E."/>
            <person name="Matthews C.D."/>
            <person name="Mauceli E."/>
            <person name="Menzel U."/>
            <person name="Mihalev A.H."/>
            <person name="Minoshima S."/>
            <person name="Murayama Y."/>
            <person name="Naylor J.W."/>
            <person name="Nicol R."/>
            <person name="Nguyen C."/>
            <person name="O'Leary S.B."/>
            <person name="O'Neill K."/>
            <person name="Parker S.C.J."/>
            <person name="Polley A."/>
            <person name="Raymond C.K."/>
            <person name="Reichwald K."/>
            <person name="Rodriguez J."/>
            <person name="Sasaki T."/>
            <person name="Schilhabel M."/>
            <person name="Siddiqui R."/>
            <person name="Smith C.L."/>
            <person name="Sneddon T.P."/>
            <person name="Talamas J.A."/>
            <person name="Tenzin P."/>
            <person name="Topham K."/>
            <person name="Venkataraman V."/>
            <person name="Wen G."/>
            <person name="Yamazaki S."/>
            <person name="Young S.K."/>
            <person name="Zeng Q."/>
            <person name="Zimmer A.R."/>
            <person name="Rosenthal A."/>
            <person name="Birren B.W."/>
            <person name="Platzer M."/>
            <person name="Shimizu N."/>
            <person name="Lander E.S."/>
        </authorList>
    </citation>
    <scope>NUCLEOTIDE SEQUENCE [LARGE SCALE GENOMIC DNA]</scope>
</reference>
<reference key="3">
    <citation type="journal article" date="2004" name="Genome Res.">
        <title>The status, quality, and expansion of the NIH full-length cDNA project: the Mammalian Gene Collection (MGC).</title>
        <authorList>
            <consortium name="The MGC Project Team"/>
        </authorList>
    </citation>
    <scope>NUCLEOTIDE SEQUENCE [LARGE SCALE MRNA]</scope>
    <scope>VARIANT ILE-10</scope>
    <source>
        <tissue>Lung</tissue>
        <tissue>Urinary bladder</tissue>
    </source>
</reference>
<reference key="4">
    <citation type="journal article" date="2004" name="Cancer Res.">
        <title>TC-1 is a novel tumorigenic and natively disordered protein associated with thyroid cancer.</title>
        <authorList>
            <person name="Sunde M."/>
            <person name="McGrath K.C.Y."/>
            <person name="Young L."/>
            <person name="Matthews J.M."/>
            <person name="Chua E.L."/>
            <person name="Mackay J.P."/>
            <person name="Death A.K."/>
        </authorList>
    </citation>
    <scope>FUNCTION</scope>
    <scope>SUBUNIT</scope>
</reference>
<reference key="5">
    <citation type="journal article" date="2006" name="Cancer Res.">
        <title>TC1 (C8orf4) enhances the Wnt/beta-catenin pathway by relieving antagonistic activity of Chibby.</title>
        <authorList>
            <person name="Jung Y."/>
            <person name="Bang S."/>
            <person name="Choi K."/>
            <person name="Kim E."/>
            <person name="Kim Y."/>
            <person name="Kim J."/>
            <person name="Park J."/>
            <person name="Koo H."/>
            <person name="Moon R.T."/>
            <person name="Song K."/>
            <person name="Lee I."/>
        </authorList>
    </citation>
    <scope>FUNCTION</scope>
    <scope>INTERACTION WITH CBY1</scope>
    <scope>TISSUE SPECIFICITY</scope>
    <scope>SUBCELLULAR LOCATION</scope>
    <scope>MUTAGENESIS OF VAL-74; LYS-86; THR-88 AND LEU-96</scope>
</reference>
<reference key="6">
    <citation type="journal article" date="2006" name="FEBS Lett.">
        <title>TC1(C8orf4) is upregulated by IL-1beta/TNF-alpha and enhances proliferation of human follicular dendritic cells.</title>
        <authorList>
            <person name="Kim Y."/>
            <person name="Kim J."/>
            <person name="Park J."/>
            <person name="Bang S."/>
            <person name="Jung Y."/>
            <person name="Choe J."/>
            <person name="Song K."/>
            <person name="Lee I."/>
        </authorList>
    </citation>
    <scope>FUNCTION</scope>
    <scope>INDUCTION BY TNF AND IL1B</scope>
</reference>
<reference key="7">
    <citation type="journal article" date="2007" name="Biochem. Biophys. Res. Commun.">
        <title>TC1 (C8orf4) is upregulated by cellular stress and mediates heat shock response.</title>
        <authorList>
            <person name="Park J."/>
            <person name="Jung Y."/>
            <person name="Kim J."/>
            <person name="Kim K.Y."/>
            <person name="Ahn S.G."/>
            <person name="Song K."/>
            <person name="Lee I."/>
        </authorList>
    </citation>
    <scope>FUNCTION</scope>
    <scope>INDUCTION BY CELLULAR STRESS</scope>
    <scope>SUBCELLULAR LOCATION</scope>
</reference>
<reference key="8">
    <citation type="journal article" date="2008" name="BMB Rep.">
        <title>TC1 (C8orf4) is involved in ERK1/2 pathway-regulated G(1)- to S-phase transition.</title>
        <authorList>
            <person name="Wang Y.D."/>
            <person name="Bian G.H."/>
            <person name="Lv X.Y."/>
            <person name="Zheng R."/>
            <person name="Sun H."/>
            <person name="Zhang Z."/>
            <person name="Chen Y."/>
            <person name="Li Q.W."/>
            <person name="Xiao Y."/>
            <person name="Yang Q.T."/>
            <person name="Ai J.Z."/>
            <person name="Wei Y.Q."/>
            <person name="Zhou Q."/>
        </authorList>
    </citation>
    <scope>FUNCTION</scope>
    <scope>INDUCTION BY MITOGENS</scope>
</reference>
<reference key="9">
    <citation type="journal article" date="2009" name="J. Immunol.">
        <title>TC1(C8orf4) is a novel endothelial inflammatory regulator enhancing NF-kappaB activity.</title>
        <authorList>
            <person name="Kim J."/>
            <person name="Kim Y."/>
            <person name="Kim H.T."/>
            <person name="Kim D.W."/>
            <person name="Ha Y."/>
            <person name="Kim J."/>
            <person name="Kim C.H."/>
            <person name="Lee I."/>
            <person name="Song K."/>
        </authorList>
    </citation>
    <scope>FUNCTION</scope>
    <scope>INDUCTION BY TNF AND IL1B</scope>
</reference>
<reference key="10">
    <citation type="journal article" date="2014" name="PLoS ONE">
        <title>TC-1 overexpression promotes cell proliferation in human non-small cell lung cancer that can be inhibited by PD173074.</title>
        <authorList>
            <person name="Lei J."/>
            <person name="Li W."/>
            <person name="Yang Y."/>
            <person name="Lu Q."/>
            <person name="Zhang N."/>
            <person name="Bai G."/>
            <person name="Zhong D."/>
            <person name="Su K."/>
            <person name="Liu B."/>
            <person name="Li X."/>
            <person name="Wang Y."/>
            <person name="Wang X."/>
        </authorList>
    </citation>
    <scope>FUNCTION</scope>
    <scope>TISSUE SPECIFICITY</scope>
</reference>
<reference key="11">
    <citation type="journal article" date="2015" name="Nat. Commun.">
        <title>C8orf4 negatively regulates self-renewal of liver cancer stem cells via suppression of NOTCH2 signalling.</title>
        <authorList>
            <person name="Zhu P."/>
            <person name="Wang Y."/>
            <person name="Du Y."/>
            <person name="He L."/>
            <person name="Huang G."/>
            <person name="Zhang G."/>
            <person name="Yan X."/>
            <person name="Fan Z."/>
        </authorList>
    </citation>
    <scope>INTERACTION WITH NOTCH2</scope>
    <scope>SUBCELLULAR LOCATION</scope>
    <scope>TISSUE SPECIFICITY</scope>
</reference>
<sequence length="106" mass="12337">MKAKRSHQAVIMSTSLRVSPSIHGYHFDTASRKKAVGNIFENTDQESLERLFRNSGDKKAEERAKIIFAIDQDVEEKTRALMALKKRTKDKLFQFLKLRKYSIKVH</sequence>
<evidence type="ECO:0000250" key="1">
    <source>
        <dbReference type="UniProtKB" id="Q9D915"/>
    </source>
</evidence>
<evidence type="ECO:0000269" key="2">
    <source>
    </source>
</evidence>
<evidence type="ECO:0000269" key="3">
    <source>
    </source>
</evidence>
<evidence type="ECO:0000269" key="4">
    <source>
    </source>
</evidence>
<evidence type="ECO:0000269" key="5">
    <source>
    </source>
</evidence>
<evidence type="ECO:0000269" key="6">
    <source>
    </source>
</evidence>
<evidence type="ECO:0000269" key="7">
    <source>
    </source>
</evidence>
<evidence type="ECO:0000269" key="8">
    <source>
    </source>
</evidence>
<evidence type="ECO:0000269" key="9">
    <source>
    </source>
</evidence>
<evidence type="ECO:0000269" key="10">
    <source>
    </source>
</evidence>
<evidence type="ECO:0000269" key="11">
    <source>
    </source>
</evidence>
<evidence type="ECO:0000305" key="12"/>
<evidence type="ECO:0000312" key="13">
    <source>
        <dbReference type="HGNC" id="HGNC:1357"/>
    </source>
</evidence>
<dbReference type="EMBL" id="AF268037">
    <property type="protein sequence ID" value="AAF78961.1"/>
    <property type="molecule type" value="mRNA"/>
</dbReference>
<dbReference type="EMBL" id="AC022733">
    <property type="status" value="NOT_ANNOTATED_CDS"/>
    <property type="molecule type" value="Genomic_DNA"/>
</dbReference>
<dbReference type="EMBL" id="BC020623">
    <property type="protein sequence ID" value="AAH20623.1"/>
    <property type="molecule type" value="mRNA"/>
</dbReference>
<dbReference type="EMBL" id="BC021672">
    <property type="protein sequence ID" value="AAH21672.1"/>
    <property type="molecule type" value="mRNA"/>
</dbReference>
<dbReference type="CCDS" id="CCDS6115.1"/>
<dbReference type="RefSeq" id="NP_064515.2">
    <property type="nucleotide sequence ID" value="NM_020130.5"/>
</dbReference>
<dbReference type="BMRB" id="Q9NR00"/>
<dbReference type="BioGRID" id="121222">
    <property type="interactions" value="4"/>
</dbReference>
<dbReference type="FunCoup" id="Q9NR00">
    <property type="interactions" value="1653"/>
</dbReference>
<dbReference type="IntAct" id="Q9NR00">
    <property type="interactions" value="2"/>
</dbReference>
<dbReference type="STRING" id="9606.ENSP00000319914"/>
<dbReference type="iPTMnet" id="Q9NR00"/>
<dbReference type="PhosphoSitePlus" id="Q9NR00"/>
<dbReference type="BioMuta" id="TCIM"/>
<dbReference type="DMDM" id="296434443"/>
<dbReference type="MassIVE" id="Q9NR00"/>
<dbReference type="PaxDb" id="9606-ENSP00000319914"/>
<dbReference type="PeptideAtlas" id="Q9NR00"/>
<dbReference type="ProteomicsDB" id="82240"/>
<dbReference type="Antibodypedia" id="23908">
    <property type="antibodies" value="67 antibodies from 20 providers"/>
</dbReference>
<dbReference type="DNASU" id="56892"/>
<dbReference type="Ensembl" id="ENST00000315792.5">
    <property type="protein sequence ID" value="ENSP00000319914.3"/>
    <property type="gene ID" value="ENSG00000176907.5"/>
</dbReference>
<dbReference type="GeneID" id="56892"/>
<dbReference type="KEGG" id="hsa:56892"/>
<dbReference type="MANE-Select" id="ENST00000315792.5">
    <property type="protein sequence ID" value="ENSP00000319914.3"/>
    <property type="RefSeq nucleotide sequence ID" value="NM_020130.5"/>
    <property type="RefSeq protein sequence ID" value="NP_064515.2"/>
</dbReference>
<dbReference type="UCSC" id="uc003xnq.3">
    <property type="organism name" value="human"/>
</dbReference>
<dbReference type="AGR" id="HGNC:1357"/>
<dbReference type="CTD" id="56892"/>
<dbReference type="DisGeNET" id="56892"/>
<dbReference type="GeneCards" id="TCIM"/>
<dbReference type="HGNC" id="HGNC:1357">
    <property type="gene designation" value="TCIM"/>
</dbReference>
<dbReference type="HPA" id="ENSG00000176907">
    <property type="expression patterns" value="Low tissue specificity"/>
</dbReference>
<dbReference type="MIM" id="607702">
    <property type="type" value="gene"/>
</dbReference>
<dbReference type="neXtProt" id="NX_Q9NR00"/>
<dbReference type="OpenTargets" id="ENSG00000176907"/>
<dbReference type="PharmGKB" id="PA25962"/>
<dbReference type="VEuPathDB" id="HostDB:ENSG00000176907"/>
<dbReference type="eggNOG" id="ENOG502S1N0">
    <property type="taxonomic scope" value="Eukaryota"/>
</dbReference>
<dbReference type="GeneTree" id="ENSGT00390000003458"/>
<dbReference type="HOGENOM" id="CLU_172922_0_0_1"/>
<dbReference type="InParanoid" id="Q9NR00"/>
<dbReference type="OMA" id="HGCRFDT"/>
<dbReference type="OrthoDB" id="8681175at2759"/>
<dbReference type="PAN-GO" id="Q9NR00">
    <property type="GO annotations" value="5 GO annotations based on evolutionary models"/>
</dbReference>
<dbReference type="PhylomeDB" id="Q9NR00"/>
<dbReference type="TreeFam" id="TF338287"/>
<dbReference type="PathwayCommons" id="Q9NR00"/>
<dbReference type="SignaLink" id="Q9NR00"/>
<dbReference type="BioGRID-ORCS" id="56892">
    <property type="hits" value="12 hits in 1127 CRISPR screens"/>
</dbReference>
<dbReference type="CD-CODE" id="804901D1">
    <property type="entry name" value="Nuclear speckle"/>
</dbReference>
<dbReference type="GeneWiki" id="C8orf4"/>
<dbReference type="GenomeRNAi" id="56892"/>
<dbReference type="Pharos" id="Q9NR00">
    <property type="development level" value="Tbio"/>
</dbReference>
<dbReference type="PRO" id="PR:Q9NR00"/>
<dbReference type="Proteomes" id="UP000005640">
    <property type="component" value="Chromosome 8"/>
</dbReference>
<dbReference type="RNAct" id="Q9NR00">
    <property type="molecule type" value="protein"/>
</dbReference>
<dbReference type="Bgee" id="ENSG00000176907">
    <property type="expression patterns" value="Expressed in parotid gland and 179 other cell types or tissues"/>
</dbReference>
<dbReference type="GO" id="GO:0005737">
    <property type="term" value="C:cytoplasm"/>
    <property type="evidence" value="ECO:0000314"/>
    <property type="project" value="UniProtKB"/>
</dbReference>
<dbReference type="GO" id="GO:0005829">
    <property type="term" value="C:cytosol"/>
    <property type="evidence" value="ECO:0000314"/>
    <property type="project" value="HPA"/>
</dbReference>
<dbReference type="GO" id="GO:0016607">
    <property type="term" value="C:nuclear speck"/>
    <property type="evidence" value="ECO:0000314"/>
    <property type="project" value="UniProtKB"/>
</dbReference>
<dbReference type="GO" id="GO:0005730">
    <property type="term" value="C:nucleolus"/>
    <property type="evidence" value="ECO:0000314"/>
    <property type="project" value="UniProtKB"/>
</dbReference>
<dbReference type="GO" id="GO:0005654">
    <property type="term" value="C:nucleoplasm"/>
    <property type="evidence" value="ECO:0000314"/>
    <property type="project" value="HPA"/>
</dbReference>
<dbReference type="GO" id="GO:0005634">
    <property type="term" value="C:nucleus"/>
    <property type="evidence" value="ECO:0000314"/>
    <property type="project" value="UniProtKB"/>
</dbReference>
<dbReference type="GO" id="GO:0005886">
    <property type="term" value="C:plasma membrane"/>
    <property type="evidence" value="ECO:0000314"/>
    <property type="project" value="HPA"/>
</dbReference>
<dbReference type="GO" id="GO:0005112">
    <property type="term" value="F:Notch binding"/>
    <property type="evidence" value="ECO:0000353"/>
    <property type="project" value="UniProtKB"/>
</dbReference>
<dbReference type="GO" id="GO:0006915">
    <property type="term" value="P:apoptotic process"/>
    <property type="evidence" value="ECO:0007669"/>
    <property type="project" value="UniProtKB-KW"/>
</dbReference>
<dbReference type="GO" id="GO:0034605">
    <property type="term" value="P:cellular response to heat"/>
    <property type="evidence" value="ECO:0000314"/>
    <property type="project" value="UniProtKB"/>
</dbReference>
<dbReference type="GO" id="GO:0002264">
    <property type="term" value="P:endothelial cell activation involved in immune response"/>
    <property type="evidence" value="ECO:0000314"/>
    <property type="project" value="UniProtKB"/>
</dbReference>
<dbReference type="GO" id="GO:0043066">
    <property type="term" value="P:negative regulation of apoptotic process"/>
    <property type="evidence" value="ECO:0000314"/>
    <property type="project" value="CAFA"/>
</dbReference>
<dbReference type="GO" id="GO:0045746">
    <property type="term" value="P:negative regulation of Notch signaling pathway"/>
    <property type="evidence" value="ECO:0000314"/>
    <property type="project" value="UniProtKB"/>
</dbReference>
<dbReference type="GO" id="GO:1901224">
    <property type="term" value="P:positive regulation of non-canonical NF-kappaB signal transduction"/>
    <property type="evidence" value="ECO:0000314"/>
    <property type="project" value="UniProtKB"/>
</dbReference>
<dbReference type="GO" id="GO:0010739">
    <property type="term" value="P:positive regulation of protein kinase A signaling"/>
    <property type="evidence" value="ECO:0000314"/>
    <property type="project" value="CAFA"/>
</dbReference>
<dbReference type="GO" id="GO:1900020">
    <property type="term" value="P:positive regulation of protein kinase C activity"/>
    <property type="evidence" value="ECO:0000314"/>
    <property type="project" value="CAFA"/>
</dbReference>
<dbReference type="GO" id="GO:1902806">
    <property type="term" value="P:regulation of cell cycle G1/S phase transition"/>
    <property type="evidence" value="ECO:0000314"/>
    <property type="project" value="UniProtKB"/>
</dbReference>
<dbReference type="GO" id="GO:1903706">
    <property type="term" value="P:regulation of hemopoiesis"/>
    <property type="evidence" value="ECO:0007669"/>
    <property type="project" value="Ensembl"/>
</dbReference>
<dbReference type="DisProt" id="DP00372"/>
<dbReference type="InterPro" id="IPR020282">
    <property type="entry name" value="Avpi1/C8orf4_dom"/>
</dbReference>
<dbReference type="InterPro" id="IPR039580">
    <property type="entry name" value="Tcim"/>
</dbReference>
<dbReference type="PANTHER" id="PTHR32358">
    <property type="entry name" value="TRANSCRIPTIONAL AND IMMUNE RESPONSE REGULATOR"/>
    <property type="match status" value="1"/>
</dbReference>
<dbReference type="PANTHER" id="PTHR32358:SF1">
    <property type="entry name" value="TRANSCRIPTIONAL AND IMMUNE RESPONSE REGULATOR"/>
    <property type="match status" value="1"/>
</dbReference>
<dbReference type="Pfam" id="PF15063">
    <property type="entry name" value="TC1"/>
    <property type="match status" value="1"/>
</dbReference>
<gene>
    <name evidence="13" type="primary">TCIM</name>
    <name type="synonym">C8orf4</name>
    <name type="synonym">TC1</name>
</gene>
<proteinExistence type="evidence at protein level"/>
<protein>
    <recommendedName>
        <fullName evidence="13">Transcriptional and immune response regulator</fullName>
    </recommendedName>
    <alternativeName>
        <fullName>Thyroid cancer protein 1</fullName>
        <shortName>TC-1</shortName>
    </alternativeName>
</protein>
<feature type="chain" id="PRO_0000089605" description="Transcriptional and immune response regulator">
    <location>
        <begin position="1"/>
        <end position="106"/>
    </location>
</feature>
<feature type="sequence variant" id="VAR_050819" description="In dbSNP:rs6474226." evidence="2 4">
    <original>V</original>
    <variation>I</variation>
    <location>
        <position position="10"/>
    </location>
</feature>
<feature type="mutagenesis site" description="No effect on interaction with CBY1." evidence="5">
    <original>V</original>
    <variation>E</variation>
    <location>
        <position position="74"/>
    </location>
</feature>
<feature type="mutagenesis site" description="Abolishes interaction with CBY1. Forms irregular perinuclear cytoplasmic aggregates." evidence="5">
    <original>K</original>
    <variation>Q</variation>
    <location>
        <position position="86"/>
    </location>
</feature>
<feature type="mutagenesis site" description="Abolishes interaction with CBY1." evidence="5">
    <original>T</original>
    <variation>K</variation>
    <location>
        <position position="88"/>
    </location>
</feature>
<feature type="mutagenesis site" description="No effect on interaction with CBY1. Accumulates at nucleoli periphery." evidence="5">
    <original>L</original>
    <variation>R</variation>
    <location>
        <position position="96"/>
    </location>
</feature>
<accession>Q9NR00</accession>
<organism>
    <name type="scientific">Homo sapiens</name>
    <name type="common">Human</name>
    <dbReference type="NCBI Taxonomy" id="9606"/>
    <lineage>
        <taxon>Eukaryota</taxon>
        <taxon>Metazoa</taxon>
        <taxon>Chordata</taxon>
        <taxon>Craniata</taxon>
        <taxon>Vertebrata</taxon>
        <taxon>Euteleostomi</taxon>
        <taxon>Mammalia</taxon>
        <taxon>Eutheria</taxon>
        <taxon>Euarchontoglires</taxon>
        <taxon>Primates</taxon>
        <taxon>Haplorrhini</taxon>
        <taxon>Catarrhini</taxon>
        <taxon>Hominidae</taxon>
        <taxon>Homo</taxon>
    </lineage>
</organism>
<comment type="function">
    <text evidence="1 3 5 6 7 8 9 10 11 12">Seems to be involved in the regulation of cell growth an differentiation, may play different and opposite roles depending on the tissue or cell type. May enhance the WNT-CTNNB1 pathway by relieving antagonistic activity of CBY1 (PubMed:16424001, PubMed:16730711). Enhances the proliferation of follicular dendritic cells (PubMed:16730711). Plays a role in the mitogen-activated MAPK2/3 signaling pathway, positively regulates G1-to-S-phase transition of the cell cycle (PubMed:18959821). In endothelial cells, enhances key inflammatory mediators and inflammatory response through the modulation of NF-kappaB transcriptional regulatory activity (PubMed:19684084). Involved in the regulation of heat shock response, seems to play a positive feedback with HSF1 to modulate heat-shock downstream gene expression (PubMed:17603013). Plays a role in the regulation of hematopoiesis even if the mechanisms are unknown (By similarity). In cancers such as thyroid or lung cancer, it has been described as promoter of cell proliferation, G1-to-S-phase transition and inhibitor of apoptosis (PubMed:15087392, PubMed:24941347). However, it negatively regulates self-renewal of liver cancer cells via suppresion of NOTCH2 signaling (PubMed:25985737).</text>
</comment>
<comment type="subunit">
    <text evidence="3 5 11">Monomer. Interacts with NOTCH2 (via ANK repeats), the interaction inhibits the nuclear translocation of NOTCH2 N2ICD (PubMed:25985737). Interacts (C-terminus) with CBY1 (C-terminus), TCIM competes with CTNNB1 for the interaction with CBY1 (PubMed:16424001).</text>
</comment>
<comment type="subcellular location">
    <subcellularLocation>
        <location evidence="5 11">Cytoplasm</location>
    </subcellularLocation>
    <subcellularLocation>
        <location evidence="5">Nucleus</location>
        <location evidence="5">Nucleolus</location>
    </subcellularLocation>
    <subcellularLocation>
        <location evidence="5">Nucleus speckle</location>
    </subcellularLocation>
    <subcellularLocation>
        <location evidence="5">Nucleus</location>
    </subcellularLocation>
    <text evidence="5 7">Localizes in nucleus speckles in presence of CBY1 (PubMed:16424001). Translocates to the nucleus upon cellular stress such as H(2)O(2) (PubMed:17603013).</text>
</comment>
<comment type="tissue specificity">
    <text evidence="2 10 11">Ubiquitous. Expressed in thyroid papillary carcinoma. Expressed in liver, expression levels decrease in hepatocellular carcinoma (PubMed:25985737). Slightly detected in normal lung, its expression is highly induced in lung cancer cells (at protein level) (PubMed:24941347).</text>
</comment>
<comment type="induction">
    <text evidence="6 7 8 9">Induced by pro-inflammatory cytokines such as TNF and IL1B, via NF-kappaB signaling (PubMed:16730711, PubMed:19684084). Induced by cellular stresses such as heat shock, TPA, lipopolysaccharide and UV (PubMed:17603013). Induced by mitogens such as thrombin (PubMed:18959821).</text>
</comment>
<name>TCIM_HUMAN</name>
<keyword id="KW-0053">Apoptosis</keyword>
<keyword id="KW-0963">Cytoplasm</keyword>
<keyword id="KW-0539">Nucleus</keyword>
<keyword id="KW-1267">Proteomics identification</keyword>
<keyword id="KW-1185">Reference proteome</keyword>